<proteinExistence type="evidence at protein level"/>
<comment type="function">
    <text>Inhibits mammalian alpha-amylases specifically but has no action on plant and microbial alpha-amylases.</text>
</comment>
<accession>P20078</accession>
<feature type="signal peptide" evidence="1">
    <location>
        <begin position="1"/>
        <end position="32"/>
    </location>
</feature>
<feature type="chain" id="PRO_0000014342" description="Alpha-amylase inhibitor Haim-2">
    <location>
        <begin position="33"/>
        <end position="120"/>
    </location>
</feature>
<feature type="disulfide bond">
    <location>
        <begin position="43"/>
        <end position="59"/>
    </location>
</feature>
<feature type="disulfide bond">
    <location>
        <begin position="77"/>
        <end position="104"/>
    </location>
</feature>
<reference key="1">
    <citation type="journal article" date="1988" name="J. Bacteriol.">
        <title>Nucleotide sequence and expression of a Streptomyces griseosporeus proteinaceous alpha-amylase inhibitor (HaimII) gene.</title>
        <authorList>
            <person name="Nagaso H."/>
            <person name="Saito S."/>
            <person name="Saito H."/>
            <person name="Takahashi H."/>
        </authorList>
    </citation>
    <scope>NUCLEOTIDE SEQUENCE [GENOMIC DNA]</scope>
    <source>
        <strain>YM-25</strain>
    </source>
</reference>
<reference key="2">
    <citation type="journal article" date="1985" name="J. Biochem.">
        <title>Amino acid sequence of protein alpha-amylase inhibitor from Streptomyces griseosporeus YM-25.</title>
        <authorList>
            <person name="Murai H."/>
            <person name="Hara S."/>
            <person name="Ikenaka T."/>
            <person name="Goto A."/>
            <person name="Arai M."/>
            <person name="Murao S."/>
        </authorList>
    </citation>
    <scope>PROTEIN SEQUENCE OF 38-120</scope>
    <source>
        <strain>YM-25</strain>
    </source>
</reference>
<sequence>MKRYVCSTFVACVMVLCVIPASGAAAHEAVAEDAGNRIAAPACVHFTADWRYTFVTNDCSIDYSVTVAYGDGTDVPCRSANPGDILTFPGYGTRGNEVLGAVLCATDGSALPVDRERAVR</sequence>
<keyword id="KW-0022">Alpha-amylase inhibitor</keyword>
<keyword id="KW-0903">Direct protein sequencing</keyword>
<keyword id="KW-1015">Disulfide bond</keyword>
<keyword id="KW-0732">Signal</keyword>
<dbReference type="EMBL" id="M22620">
    <property type="protein sequence ID" value="AAA50324.1"/>
    <property type="molecule type" value="Genomic_DNA"/>
</dbReference>
<dbReference type="PIR" id="A01333">
    <property type="entry name" value="WISMAG"/>
</dbReference>
<dbReference type="BMRB" id="P20078"/>
<dbReference type="SMR" id="P20078"/>
<dbReference type="GO" id="GO:0015066">
    <property type="term" value="F:alpha-amylase inhibitor activity"/>
    <property type="evidence" value="ECO:0007669"/>
    <property type="project" value="UniProtKB-KW"/>
</dbReference>
<dbReference type="Gene3D" id="2.60.40.20">
    <property type="entry name" value="Alpha-amylase inhibitor"/>
    <property type="match status" value="1"/>
</dbReference>
<dbReference type="InterPro" id="IPR000833">
    <property type="entry name" value="A-amylase_inhib"/>
</dbReference>
<dbReference type="InterPro" id="IPR036379">
    <property type="entry name" value="A-amylase_inhib_sf"/>
</dbReference>
<dbReference type="Pfam" id="PF01356">
    <property type="entry name" value="A_amylase_inhib"/>
    <property type="match status" value="1"/>
</dbReference>
<dbReference type="PIRSF" id="PIRSF001658">
    <property type="entry name" value="Amylase_inhib"/>
    <property type="match status" value="1"/>
</dbReference>
<dbReference type="SMART" id="SM00783">
    <property type="entry name" value="A_amylase_inhib"/>
    <property type="match status" value="1"/>
</dbReference>
<dbReference type="SUPFAM" id="SSF49498">
    <property type="entry name" value="alpha-Amylase inhibitor tendamistat"/>
    <property type="match status" value="1"/>
</dbReference>
<organism>
    <name type="scientific">Streptomyces griseosporeus</name>
    <dbReference type="NCBI Taxonomy" id="1910"/>
    <lineage>
        <taxon>Bacteria</taxon>
        <taxon>Bacillati</taxon>
        <taxon>Actinomycetota</taxon>
        <taxon>Actinomycetes</taxon>
        <taxon>Kitasatosporales</taxon>
        <taxon>Streptomycetaceae</taxon>
        <taxon>Streptomyces</taxon>
    </lineage>
</organism>
<name>IAA2_STRGS</name>
<protein>
    <recommendedName>
        <fullName>Alpha-amylase inhibitor Haim-2</fullName>
    </recommendedName>
    <alternativeName>
        <fullName>Haim II</fullName>
    </alternativeName>
</protein>
<evidence type="ECO:0000305" key="1"/>